<evidence type="ECO:0000255" key="1">
    <source>
        <dbReference type="HAMAP-Rule" id="MF_00740"/>
    </source>
</evidence>
<feature type="chain" id="PRO_0000258275" description="Phosphopentomutase">
    <location>
        <begin position="1"/>
        <end position="394"/>
    </location>
</feature>
<feature type="binding site" evidence="1">
    <location>
        <position position="13"/>
    </location>
    <ligand>
        <name>Mn(2+)</name>
        <dbReference type="ChEBI" id="CHEBI:29035"/>
        <label>1</label>
    </ligand>
</feature>
<feature type="binding site" evidence="1">
    <location>
        <position position="286"/>
    </location>
    <ligand>
        <name>Mn(2+)</name>
        <dbReference type="ChEBI" id="CHEBI:29035"/>
        <label>2</label>
    </ligand>
</feature>
<feature type="binding site" evidence="1">
    <location>
        <position position="291"/>
    </location>
    <ligand>
        <name>Mn(2+)</name>
        <dbReference type="ChEBI" id="CHEBI:29035"/>
        <label>2</label>
    </ligand>
</feature>
<feature type="binding site" evidence="1">
    <location>
        <position position="327"/>
    </location>
    <ligand>
        <name>Mn(2+)</name>
        <dbReference type="ChEBI" id="CHEBI:29035"/>
        <label>1</label>
    </ligand>
</feature>
<feature type="binding site" evidence="1">
    <location>
        <position position="328"/>
    </location>
    <ligand>
        <name>Mn(2+)</name>
        <dbReference type="ChEBI" id="CHEBI:29035"/>
        <label>1</label>
    </ligand>
</feature>
<feature type="binding site" evidence="1">
    <location>
        <position position="339"/>
    </location>
    <ligand>
        <name>Mn(2+)</name>
        <dbReference type="ChEBI" id="CHEBI:29035"/>
        <label>2</label>
    </ligand>
</feature>
<reference key="1">
    <citation type="journal article" date="2006" name="J. Bacteriol.">
        <title>Pathogenomic sequence analysis of Bacillus cereus and Bacillus thuringiensis isolates closely related to Bacillus anthracis.</title>
        <authorList>
            <person name="Han C.S."/>
            <person name="Xie G."/>
            <person name="Challacombe J.F."/>
            <person name="Altherr M.R."/>
            <person name="Bhotika S.S."/>
            <person name="Bruce D."/>
            <person name="Campbell C.S."/>
            <person name="Campbell M.L."/>
            <person name="Chen J."/>
            <person name="Chertkov O."/>
            <person name="Cleland C."/>
            <person name="Dimitrijevic M."/>
            <person name="Doggett N.A."/>
            <person name="Fawcett J.J."/>
            <person name="Glavina T."/>
            <person name="Goodwin L.A."/>
            <person name="Hill K.K."/>
            <person name="Hitchcock P."/>
            <person name="Jackson P.J."/>
            <person name="Keim P."/>
            <person name="Kewalramani A.R."/>
            <person name="Longmire J."/>
            <person name="Lucas S."/>
            <person name="Malfatti S."/>
            <person name="McMurry K."/>
            <person name="Meincke L.J."/>
            <person name="Misra M."/>
            <person name="Moseman B.L."/>
            <person name="Mundt M."/>
            <person name="Munk A.C."/>
            <person name="Okinaka R.T."/>
            <person name="Parson-Quintana B."/>
            <person name="Reilly L.P."/>
            <person name="Richardson P."/>
            <person name="Robinson D.L."/>
            <person name="Rubin E."/>
            <person name="Saunders E."/>
            <person name="Tapia R."/>
            <person name="Tesmer J.G."/>
            <person name="Thayer N."/>
            <person name="Thompson L.S."/>
            <person name="Tice H."/>
            <person name="Ticknor L.O."/>
            <person name="Wills P.L."/>
            <person name="Brettin T.S."/>
            <person name="Gilna P."/>
        </authorList>
    </citation>
    <scope>NUCLEOTIDE SEQUENCE [LARGE SCALE GENOMIC DNA]</scope>
    <source>
        <strain>97-27</strain>
    </source>
</reference>
<sequence length="394" mass="44113">MNKYKRIFLVVMDSVGIGEAPDAEQFGDLGSDTIGHIAEHMNGLHMPNMVKLGLGNIREMKGISKVEKPLGYYTKMQEKSTGKDTMTGHWEIMGLYIDTPFQVFPEGFPKELLDELEEKTGRKIIGNKPASGTEILDELGQEQMETGSLIVYTSADSVLQIAAHEEVVPLDELYKICKIARELTLDEKYMVGRVIARPFVGEPGNFTRTPNRHDYALKPFGRTVMNELKDSDYDVIAIGKISDIYDGEGVTESLRTKSNMDGMDKLVDTLNMDFTGLSFLNLVDFDALFGHRRDPQGYGEALQEYDARLPEVFEKLKEDDLLLITADHGNDPVHHGTDHTREYVPLLAYSPSMKEGGQELPLRQTFADIGATVAENFGVKMPEYGTSFLNELKK</sequence>
<dbReference type="EC" id="5.4.2.7" evidence="1"/>
<dbReference type="EMBL" id="AE017355">
    <property type="protein sequence ID" value="AAT62526.1"/>
    <property type="molecule type" value="Genomic_DNA"/>
</dbReference>
<dbReference type="RefSeq" id="WP_001046067.1">
    <property type="nucleotide sequence ID" value="NC_005957.1"/>
</dbReference>
<dbReference type="RefSeq" id="YP_038147.1">
    <property type="nucleotide sequence ID" value="NC_005957.1"/>
</dbReference>
<dbReference type="SMR" id="Q6HE79"/>
<dbReference type="KEGG" id="btk:BT9727_3828"/>
<dbReference type="PATRIC" id="fig|281309.8.peg.4082"/>
<dbReference type="HOGENOM" id="CLU_053861_0_0_9"/>
<dbReference type="UniPathway" id="UPA00002">
    <property type="reaction ID" value="UER00467"/>
</dbReference>
<dbReference type="Proteomes" id="UP000001301">
    <property type="component" value="Chromosome"/>
</dbReference>
<dbReference type="GO" id="GO:0005829">
    <property type="term" value="C:cytosol"/>
    <property type="evidence" value="ECO:0007669"/>
    <property type="project" value="TreeGrafter"/>
</dbReference>
<dbReference type="GO" id="GO:0000287">
    <property type="term" value="F:magnesium ion binding"/>
    <property type="evidence" value="ECO:0007669"/>
    <property type="project" value="InterPro"/>
</dbReference>
<dbReference type="GO" id="GO:0030145">
    <property type="term" value="F:manganese ion binding"/>
    <property type="evidence" value="ECO:0007669"/>
    <property type="project" value="UniProtKB-UniRule"/>
</dbReference>
<dbReference type="GO" id="GO:0008973">
    <property type="term" value="F:phosphopentomutase activity"/>
    <property type="evidence" value="ECO:0007669"/>
    <property type="project" value="UniProtKB-UniRule"/>
</dbReference>
<dbReference type="GO" id="GO:0006018">
    <property type="term" value="P:2-deoxyribose 1-phosphate catabolic process"/>
    <property type="evidence" value="ECO:0007669"/>
    <property type="project" value="UniProtKB-UniRule"/>
</dbReference>
<dbReference type="GO" id="GO:0006015">
    <property type="term" value="P:5-phosphoribose 1-diphosphate biosynthetic process"/>
    <property type="evidence" value="ECO:0007669"/>
    <property type="project" value="UniProtKB-UniPathway"/>
</dbReference>
<dbReference type="GO" id="GO:0043094">
    <property type="term" value="P:metabolic compound salvage"/>
    <property type="evidence" value="ECO:0007669"/>
    <property type="project" value="InterPro"/>
</dbReference>
<dbReference type="GO" id="GO:0009117">
    <property type="term" value="P:nucleotide metabolic process"/>
    <property type="evidence" value="ECO:0007669"/>
    <property type="project" value="InterPro"/>
</dbReference>
<dbReference type="CDD" id="cd16009">
    <property type="entry name" value="PPM"/>
    <property type="match status" value="1"/>
</dbReference>
<dbReference type="FunFam" id="3.30.70.1250:FF:000001">
    <property type="entry name" value="Phosphopentomutase"/>
    <property type="match status" value="1"/>
</dbReference>
<dbReference type="Gene3D" id="3.40.720.10">
    <property type="entry name" value="Alkaline Phosphatase, subunit A"/>
    <property type="match status" value="1"/>
</dbReference>
<dbReference type="Gene3D" id="3.30.70.1250">
    <property type="entry name" value="Phosphopentomutase"/>
    <property type="match status" value="1"/>
</dbReference>
<dbReference type="HAMAP" id="MF_00740">
    <property type="entry name" value="Phosphopentomut"/>
    <property type="match status" value="1"/>
</dbReference>
<dbReference type="InterPro" id="IPR017850">
    <property type="entry name" value="Alkaline_phosphatase_core_sf"/>
</dbReference>
<dbReference type="InterPro" id="IPR010045">
    <property type="entry name" value="DeoB"/>
</dbReference>
<dbReference type="InterPro" id="IPR006124">
    <property type="entry name" value="Metalloenzyme"/>
</dbReference>
<dbReference type="InterPro" id="IPR024052">
    <property type="entry name" value="Phosphopentomutase_DeoB_cap_sf"/>
</dbReference>
<dbReference type="NCBIfam" id="TIGR01696">
    <property type="entry name" value="deoB"/>
    <property type="match status" value="1"/>
</dbReference>
<dbReference type="NCBIfam" id="NF003766">
    <property type="entry name" value="PRK05362.1"/>
    <property type="match status" value="1"/>
</dbReference>
<dbReference type="PANTHER" id="PTHR21110">
    <property type="entry name" value="PHOSPHOPENTOMUTASE"/>
    <property type="match status" value="1"/>
</dbReference>
<dbReference type="PANTHER" id="PTHR21110:SF0">
    <property type="entry name" value="PHOSPHOPENTOMUTASE"/>
    <property type="match status" value="1"/>
</dbReference>
<dbReference type="Pfam" id="PF01676">
    <property type="entry name" value="Metalloenzyme"/>
    <property type="match status" value="1"/>
</dbReference>
<dbReference type="PIRSF" id="PIRSF001491">
    <property type="entry name" value="Ppentomutase"/>
    <property type="match status" value="1"/>
</dbReference>
<dbReference type="SUPFAM" id="SSF53649">
    <property type="entry name" value="Alkaline phosphatase-like"/>
    <property type="match status" value="1"/>
</dbReference>
<dbReference type="SUPFAM" id="SSF143856">
    <property type="entry name" value="DeoB insert domain-like"/>
    <property type="match status" value="1"/>
</dbReference>
<accession>Q6HE79</accession>
<proteinExistence type="inferred from homology"/>
<keyword id="KW-0963">Cytoplasm</keyword>
<keyword id="KW-0413">Isomerase</keyword>
<keyword id="KW-0464">Manganese</keyword>
<keyword id="KW-0479">Metal-binding</keyword>
<comment type="function">
    <text evidence="1">Isomerase that catalyzes the conversion of deoxy-ribose 1-phosphate (dRib-1-P) and ribose 1-phosphate (Rib-1-P) to deoxy-ribose 5-phosphate (dRib-5-P) and ribose 5-phosphate (Rib-5-P), respectively.</text>
</comment>
<comment type="catalytic activity">
    <reaction evidence="1">
        <text>2-deoxy-alpha-D-ribose 1-phosphate = 2-deoxy-D-ribose 5-phosphate</text>
        <dbReference type="Rhea" id="RHEA:27658"/>
        <dbReference type="ChEBI" id="CHEBI:57259"/>
        <dbReference type="ChEBI" id="CHEBI:62877"/>
        <dbReference type="EC" id="5.4.2.7"/>
    </reaction>
</comment>
<comment type="catalytic activity">
    <reaction evidence="1">
        <text>alpha-D-ribose 1-phosphate = D-ribose 5-phosphate</text>
        <dbReference type="Rhea" id="RHEA:18793"/>
        <dbReference type="ChEBI" id="CHEBI:57720"/>
        <dbReference type="ChEBI" id="CHEBI:78346"/>
        <dbReference type="EC" id="5.4.2.7"/>
    </reaction>
</comment>
<comment type="cofactor">
    <cofactor evidence="1">
        <name>Mn(2+)</name>
        <dbReference type="ChEBI" id="CHEBI:29035"/>
    </cofactor>
    <text evidence="1">Binds 2 manganese ions.</text>
</comment>
<comment type="pathway">
    <text evidence="1">Carbohydrate degradation; 2-deoxy-D-ribose 1-phosphate degradation; D-glyceraldehyde 3-phosphate and acetaldehyde from 2-deoxy-alpha-D-ribose 1-phosphate: step 1/2.</text>
</comment>
<comment type="subcellular location">
    <subcellularLocation>
        <location evidence="1">Cytoplasm</location>
    </subcellularLocation>
</comment>
<comment type="similarity">
    <text evidence="1">Belongs to the phosphopentomutase family.</text>
</comment>
<gene>
    <name evidence="1" type="primary">deoB</name>
    <name type="ordered locus">BT9727_3828</name>
</gene>
<protein>
    <recommendedName>
        <fullName evidence="1">Phosphopentomutase</fullName>
        <ecNumber evidence="1">5.4.2.7</ecNumber>
    </recommendedName>
    <alternativeName>
        <fullName evidence="1">Phosphodeoxyribomutase</fullName>
    </alternativeName>
</protein>
<name>DEOB_BACHK</name>
<organism>
    <name type="scientific">Bacillus thuringiensis subsp. konkukian (strain 97-27)</name>
    <dbReference type="NCBI Taxonomy" id="281309"/>
    <lineage>
        <taxon>Bacteria</taxon>
        <taxon>Bacillati</taxon>
        <taxon>Bacillota</taxon>
        <taxon>Bacilli</taxon>
        <taxon>Bacillales</taxon>
        <taxon>Bacillaceae</taxon>
        <taxon>Bacillus</taxon>
        <taxon>Bacillus cereus group</taxon>
    </lineage>
</organism>